<protein>
    <recommendedName>
        <fullName>Ponticulin-like protein H</fullName>
    </recommendedName>
</protein>
<organism>
    <name type="scientific">Dictyostelium discoideum</name>
    <name type="common">Social amoeba</name>
    <dbReference type="NCBI Taxonomy" id="44689"/>
    <lineage>
        <taxon>Eukaryota</taxon>
        <taxon>Amoebozoa</taxon>
        <taxon>Evosea</taxon>
        <taxon>Eumycetozoa</taxon>
        <taxon>Dictyostelia</taxon>
        <taxon>Dictyosteliales</taxon>
        <taxon>Dictyosteliaceae</taxon>
        <taxon>Dictyostelium</taxon>
    </lineage>
</organism>
<dbReference type="EMBL" id="AAFI02000089">
    <property type="protein sequence ID" value="EAL64042.1"/>
    <property type="molecule type" value="Genomic_DNA"/>
</dbReference>
<dbReference type="RefSeq" id="XP_637539.1">
    <property type="nucleotide sequence ID" value="XM_632447.1"/>
</dbReference>
<dbReference type="FunCoup" id="Q54LM2">
    <property type="interactions" value="641"/>
</dbReference>
<dbReference type="STRING" id="44689.Q54LM2"/>
<dbReference type="GlyCosmos" id="Q54LM2">
    <property type="glycosylation" value="1 site, No reported glycans"/>
</dbReference>
<dbReference type="GlyGen" id="Q54LM2">
    <property type="glycosylation" value="5 sites"/>
</dbReference>
<dbReference type="PaxDb" id="44689-DDB0237613"/>
<dbReference type="EnsemblProtists" id="EAL64042">
    <property type="protein sequence ID" value="EAL64042"/>
    <property type="gene ID" value="DDB_G0286573"/>
</dbReference>
<dbReference type="GeneID" id="8625678"/>
<dbReference type="KEGG" id="ddi:DDB_G0286573"/>
<dbReference type="dictyBase" id="DDB_G0286573">
    <property type="gene designation" value="ponH"/>
</dbReference>
<dbReference type="VEuPathDB" id="AmoebaDB:DDB_G0286573"/>
<dbReference type="eggNOG" id="ENOG502RINX">
    <property type="taxonomic scope" value="Eukaryota"/>
</dbReference>
<dbReference type="HOGENOM" id="CLU_1351064_0_0_1"/>
<dbReference type="InParanoid" id="Q54LM2"/>
<dbReference type="PRO" id="PR:Q54LM2"/>
<dbReference type="Proteomes" id="UP000002195">
    <property type="component" value="Chromosome 4"/>
</dbReference>
<dbReference type="GO" id="GO:0005886">
    <property type="term" value="C:plasma membrane"/>
    <property type="evidence" value="ECO:0007669"/>
    <property type="project" value="UniProtKB-SubCell"/>
</dbReference>
<dbReference type="GO" id="GO:0098552">
    <property type="term" value="C:side of membrane"/>
    <property type="evidence" value="ECO:0007669"/>
    <property type="project" value="UniProtKB-KW"/>
</dbReference>
<dbReference type="GO" id="GO:0003779">
    <property type="term" value="F:actin binding"/>
    <property type="evidence" value="ECO:0007669"/>
    <property type="project" value="UniProtKB-KW"/>
</dbReference>
<gene>
    <name type="primary">ponH</name>
    <name type="ORF">DDB_G0286573</name>
</gene>
<reference key="1">
    <citation type="journal article" date="2005" name="Nature">
        <title>The genome of the social amoeba Dictyostelium discoideum.</title>
        <authorList>
            <person name="Eichinger L."/>
            <person name="Pachebat J.A."/>
            <person name="Gloeckner G."/>
            <person name="Rajandream M.A."/>
            <person name="Sucgang R."/>
            <person name="Berriman M."/>
            <person name="Song J."/>
            <person name="Olsen R."/>
            <person name="Szafranski K."/>
            <person name="Xu Q."/>
            <person name="Tunggal B."/>
            <person name="Kummerfeld S."/>
            <person name="Madera M."/>
            <person name="Konfortov B.A."/>
            <person name="Rivero F."/>
            <person name="Bankier A.T."/>
            <person name="Lehmann R."/>
            <person name="Hamlin N."/>
            <person name="Davies R."/>
            <person name="Gaudet P."/>
            <person name="Fey P."/>
            <person name="Pilcher K."/>
            <person name="Chen G."/>
            <person name="Saunders D."/>
            <person name="Sodergren E.J."/>
            <person name="Davis P."/>
            <person name="Kerhornou A."/>
            <person name="Nie X."/>
            <person name="Hall N."/>
            <person name="Anjard C."/>
            <person name="Hemphill L."/>
            <person name="Bason N."/>
            <person name="Farbrother P."/>
            <person name="Desany B."/>
            <person name="Just E."/>
            <person name="Morio T."/>
            <person name="Rost R."/>
            <person name="Churcher C.M."/>
            <person name="Cooper J."/>
            <person name="Haydock S."/>
            <person name="van Driessche N."/>
            <person name="Cronin A."/>
            <person name="Goodhead I."/>
            <person name="Muzny D.M."/>
            <person name="Mourier T."/>
            <person name="Pain A."/>
            <person name="Lu M."/>
            <person name="Harper D."/>
            <person name="Lindsay R."/>
            <person name="Hauser H."/>
            <person name="James K.D."/>
            <person name="Quiles M."/>
            <person name="Madan Babu M."/>
            <person name="Saito T."/>
            <person name="Buchrieser C."/>
            <person name="Wardroper A."/>
            <person name="Felder M."/>
            <person name="Thangavelu M."/>
            <person name="Johnson D."/>
            <person name="Knights A."/>
            <person name="Loulseged H."/>
            <person name="Mungall K.L."/>
            <person name="Oliver K."/>
            <person name="Price C."/>
            <person name="Quail M.A."/>
            <person name="Urushihara H."/>
            <person name="Hernandez J."/>
            <person name="Rabbinowitsch E."/>
            <person name="Steffen D."/>
            <person name="Sanders M."/>
            <person name="Ma J."/>
            <person name="Kohara Y."/>
            <person name="Sharp S."/>
            <person name="Simmonds M.N."/>
            <person name="Spiegler S."/>
            <person name="Tivey A."/>
            <person name="Sugano S."/>
            <person name="White B."/>
            <person name="Walker D."/>
            <person name="Woodward J.R."/>
            <person name="Winckler T."/>
            <person name="Tanaka Y."/>
            <person name="Shaulsky G."/>
            <person name="Schleicher M."/>
            <person name="Weinstock G.M."/>
            <person name="Rosenthal A."/>
            <person name="Cox E.C."/>
            <person name="Chisholm R.L."/>
            <person name="Gibbs R.A."/>
            <person name="Loomis W.F."/>
            <person name="Platzer M."/>
            <person name="Kay R.R."/>
            <person name="Williams J.G."/>
            <person name="Dear P.H."/>
            <person name="Noegel A.A."/>
            <person name="Barrell B.G."/>
            <person name="Kuspa A."/>
        </authorList>
    </citation>
    <scope>NUCLEOTIDE SEQUENCE [LARGE SCALE GENOMIC DNA]</scope>
    <source>
        <strain>AX4</strain>
    </source>
</reference>
<reference key="2">
    <citation type="journal article" date="2008" name="Langmuir">
        <title>Minimal F-actin cytoskeletal system for planar supported phospholipid bilayers.</title>
        <authorList>
            <person name="Barfoot R.J."/>
            <person name="Sheikh K.H."/>
            <person name="Johnson B.R."/>
            <person name="Colyer J."/>
            <person name="Miles R.E."/>
            <person name="Jeuken L.J."/>
            <person name="Bushby R.J."/>
            <person name="Evans S.D."/>
        </authorList>
    </citation>
    <scope>FUNCTION</scope>
</reference>
<proteinExistence type="inferred from homology"/>
<comment type="function">
    <text evidence="3">Binds F-actin and nucleates actin assembly.</text>
</comment>
<comment type="subcellular location">
    <subcellularLocation>
        <location evidence="4">Cell membrane</location>
        <topology evidence="4">Lipid-anchor</topology>
        <topology evidence="4">GPI-anchor</topology>
    </subcellularLocation>
</comment>
<comment type="PTM">
    <text evidence="4">The GPI-like-anchor contains a phosphoceramide group, rather than a phosphatidyl group.</text>
</comment>
<comment type="similarity">
    <text evidence="4">Belongs to the ponticulin family.</text>
</comment>
<comment type="caution">
    <text evidence="4">The Dictyosteliida are known to produce a glycosylsphingolipidinositol anchor (GPI-like-anchor). It has not been established whether Dictyosteliida make a glycosylphosphatidylinositol anchor (GPI-anchor) also, and whether their GPI-like-anchor modifications can be interconverted with GPI-anchor modifications in a resculpting process. It has not been established that the GPI-like-anchor modification in Dictyosteliida utilizes the same sequence motif.</text>
</comment>
<sequence>MKLLNSLVLLAALCAITANGKIVEDTPDPSTVYNLFQLSSSDGGCDPAGTHSPDANVNVSVDKCRNVCNKNIKISKGTSTNQFTFQTYNDNSCSQATSDQALSFTCSDNVKKQLGTSIYSVICSTGSDSTNPTSTPSTTPSATPTVTPSTTPTVTPTVTPSTTPTVAPTVPPTTPPSTTTGSGSTVVASFGLIVSILLASLAL</sequence>
<accession>Q54LM2</accession>
<feature type="signal peptide" evidence="1">
    <location>
        <begin position="1"/>
        <end position="20"/>
    </location>
</feature>
<feature type="chain" id="PRO_0000367833" description="Ponticulin-like protein H">
    <location>
        <begin position="21"/>
        <end position="182"/>
    </location>
</feature>
<feature type="propeptide" id="PRO_0000367834" description="Removed in mature form" evidence="1">
    <location>
        <begin position="183"/>
        <end position="203"/>
    </location>
</feature>
<feature type="region of interest" description="Disordered" evidence="2">
    <location>
        <begin position="127"/>
        <end position="183"/>
    </location>
</feature>
<feature type="compositionally biased region" description="Low complexity" evidence="2">
    <location>
        <begin position="127"/>
        <end position="168"/>
    </location>
</feature>
<feature type="lipid moiety-binding region" description="GPI-like-anchor amidated serine" evidence="1">
    <location>
        <position position="182"/>
    </location>
</feature>
<feature type="glycosylation site" description="N-linked (GlcNAc...) asparagine" evidence="1">
    <location>
        <position position="58"/>
    </location>
</feature>
<keyword id="KW-0009">Actin-binding</keyword>
<keyword id="KW-1003">Cell membrane</keyword>
<keyword id="KW-0325">Glycoprotein</keyword>
<keyword id="KW-0336">GPI-anchor</keyword>
<keyword id="KW-0449">Lipoprotein</keyword>
<keyword id="KW-0472">Membrane</keyword>
<keyword id="KW-1185">Reference proteome</keyword>
<keyword id="KW-0732">Signal</keyword>
<name>PONH_DICDI</name>
<evidence type="ECO:0000255" key="1"/>
<evidence type="ECO:0000256" key="2">
    <source>
        <dbReference type="SAM" id="MobiDB-lite"/>
    </source>
</evidence>
<evidence type="ECO:0000269" key="3">
    <source>
    </source>
</evidence>
<evidence type="ECO:0000305" key="4"/>